<reference key="1">
    <citation type="journal article" date="2004" name="Nat. Biotechnol.">
        <title>Complete sequence and comparative genome analysis of the dairy bacterium Streptococcus thermophilus.</title>
        <authorList>
            <person name="Bolotin A."/>
            <person name="Quinquis B."/>
            <person name="Renault P."/>
            <person name="Sorokin A."/>
            <person name="Ehrlich S.D."/>
            <person name="Kulakauskas S."/>
            <person name="Lapidus A."/>
            <person name="Goltsman E."/>
            <person name="Mazur M."/>
            <person name="Pusch G.D."/>
            <person name="Fonstein M."/>
            <person name="Overbeek R."/>
            <person name="Kyprides N."/>
            <person name="Purnelle B."/>
            <person name="Prozzi D."/>
            <person name="Ngui K."/>
            <person name="Masuy D."/>
            <person name="Hancy F."/>
            <person name="Burteau S."/>
            <person name="Boutry M."/>
            <person name="Delcour J."/>
            <person name="Goffeau A."/>
            <person name="Hols P."/>
        </authorList>
    </citation>
    <scope>NUCLEOTIDE SEQUENCE [LARGE SCALE GENOMIC DNA]</scope>
    <source>
        <strain>ATCC BAA-250 / LMG 18311</strain>
    </source>
</reference>
<keyword id="KW-0378">Hydrolase</keyword>
<keyword id="KW-0479">Metal-binding</keyword>
<keyword id="KW-0482">Metalloprotease</keyword>
<keyword id="KW-0645">Protease</keyword>
<keyword id="KW-1185">Reference proteome</keyword>
<keyword id="KW-0862">Zinc</keyword>
<dbReference type="EMBL" id="CP000023">
    <property type="protein sequence ID" value="AAV61076.1"/>
    <property type="molecule type" value="Genomic_DNA"/>
</dbReference>
<dbReference type="SMR" id="Q5M3F9"/>
<dbReference type="STRING" id="264199.stu1465"/>
<dbReference type="KEGG" id="stl:stu1465"/>
<dbReference type="eggNOG" id="COG2003">
    <property type="taxonomic scope" value="Bacteria"/>
</dbReference>
<dbReference type="HOGENOM" id="CLU_073529_0_2_9"/>
<dbReference type="Proteomes" id="UP000001170">
    <property type="component" value="Chromosome"/>
</dbReference>
<dbReference type="GO" id="GO:0046872">
    <property type="term" value="F:metal ion binding"/>
    <property type="evidence" value="ECO:0007669"/>
    <property type="project" value="UniProtKB-KW"/>
</dbReference>
<dbReference type="GO" id="GO:0008237">
    <property type="term" value="F:metallopeptidase activity"/>
    <property type="evidence" value="ECO:0007669"/>
    <property type="project" value="UniProtKB-KW"/>
</dbReference>
<dbReference type="GO" id="GO:0006508">
    <property type="term" value="P:proteolysis"/>
    <property type="evidence" value="ECO:0007669"/>
    <property type="project" value="UniProtKB-KW"/>
</dbReference>
<dbReference type="CDD" id="cd08071">
    <property type="entry name" value="MPN_DUF2466"/>
    <property type="match status" value="1"/>
</dbReference>
<dbReference type="Gene3D" id="3.40.140.10">
    <property type="entry name" value="Cytidine Deaminase, domain 2"/>
    <property type="match status" value="1"/>
</dbReference>
<dbReference type="InterPro" id="IPR037518">
    <property type="entry name" value="MPN"/>
</dbReference>
<dbReference type="InterPro" id="IPR025657">
    <property type="entry name" value="RadC_JAB"/>
</dbReference>
<dbReference type="InterPro" id="IPR010994">
    <property type="entry name" value="RuvA_2-like"/>
</dbReference>
<dbReference type="InterPro" id="IPR001405">
    <property type="entry name" value="UPF0758"/>
</dbReference>
<dbReference type="InterPro" id="IPR020891">
    <property type="entry name" value="UPF0758_CS"/>
</dbReference>
<dbReference type="InterPro" id="IPR046778">
    <property type="entry name" value="UPF0758_N"/>
</dbReference>
<dbReference type="NCBIfam" id="NF000642">
    <property type="entry name" value="PRK00024.1"/>
    <property type="match status" value="1"/>
</dbReference>
<dbReference type="NCBIfam" id="TIGR00608">
    <property type="entry name" value="radc"/>
    <property type="match status" value="1"/>
</dbReference>
<dbReference type="PANTHER" id="PTHR30471">
    <property type="entry name" value="DNA REPAIR PROTEIN RADC"/>
    <property type="match status" value="1"/>
</dbReference>
<dbReference type="PANTHER" id="PTHR30471:SF3">
    <property type="entry name" value="UPF0758 PROTEIN YEES-RELATED"/>
    <property type="match status" value="1"/>
</dbReference>
<dbReference type="Pfam" id="PF04002">
    <property type="entry name" value="RadC"/>
    <property type="match status" value="1"/>
</dbReference>
<dbReference type="Pfam" id="PF20582">
    <property type="entry name" value="UPF0758_N"/>
    <property type="match status" value="1"/>
</dbReference>
<dbReference type="SUPFAM" id="SSF102712">
    <property type="entry name" value="JAB1/MPN domain"/>
    <property type="match status" value="1"/>
</dbReference>
<dbReference type="SUPFAM" id="SSF47781">
    <property type="entry name" value="RuvA domain 2-like"/>
    <property type="match status" value="1"/>
</dbReference>
<dbReference type="PROSITE" id="PS50249">
    <property type="entry name" value="MPN"/>
    <property type="match status" value="1"/>
</dbReference>
<dbReference type="PROSITE" id="PS01302">
    <property type="entry name" value="UPF0758"/>
    <property type="match status" value="1"/>
</dbReference>
<name>Y1465_STRT2</name>
<feature type="chain" id="PRO_0000190744" description="UPF0758 protein stu1465">
    <location>
        <begin position="1"/>
        <end position="228"/>
    </location>
</feature>
<feature type="domain" description="MPN" evidence="1">
    <location>
        <begin position="103"/>
        <end position="225"/>
    </location>
</feature>
<feature type="short sequence motif" description="JAMM motif" evidence="1">
    <location>
        <begin position="174"/>
        <end position="187"/>
    </location>
</feature>
<feature type="binding site" evidence="1">
    <location>
        <position position="174"/>
    </location>
    <ligand>
        <name>Zn(2+)</name>
        <dbReference type="ChEBI" id="CHEBI:29105"/>
        <note>catalytic</note>
    </ligand>
</feature>
<feature type="binding site" evidence="1">
    <location>
        <position position="176"/>
    </location>
    <ligand>
        <name>Zn(2+)</name>
        <dbReference type="ChEBI" id="CHEBI:29105"/>
        <note>catalytic</note>
    </ligand>
</feature>
<feature type="binding site" evidence="1">
    <location>
        <position position="187"/>
    </location>
    <ligand>
        <name>Zn(2+)</name>
        <dbReference type="ChEBI" id="CHEBI:29105"/>
        <note>catalytic</note>
    </ligand>
</feature>
<accession>Q5M3F9</accession>
<gene>
    <name type="ordered locus">stu1465</name>
</gene>
<comment type="similarity">
    <text evidence="2">Belongs to the UPF0758 family.</text>
</comment>
<sequence>MYSIVAEESGLLPRERLLQKGAEVLSDQELLAIVLRTGTRSESVLSMANRILKGMTSLADLSRLSLNELQEIPGIGRVKSIELKAMVELAKRIEKAELARSEQIMSSQQVARRMMLDIGDKPQEHLVAIYLDTQNRIIQQKTVFIGGVRRSIAEPREILYYACHLMATSLIVVHNHPSGEAYPSRNDIDFTQKIKRSCDDLGICLLDHLIVGKSTYYSFREEREDFEL</sequence>
<protein>
    <recommendedName>
        <fullName>UPF0758 protein stu1465</fullName>
    </recommendedName>
</protein>
<organism>
    <name type="scientific">Streptococcus thermophilus (strain ATCC BAA-250 / LMG 18311)</name>
    <dbReference type="NCBI Taxonomy" id="264199"/>
    <lineage>
        <taxon>Bacteria</taxon>
        <taxon>Bacillati</taxon>
        <taxon>Bacillota</taxon>
        <taxon>Bacilli</taxon>
        <taxon>Lactobacillales</taxon>
        <taxon>Streptococcaceae</taxon>
        <taxon>Streptococcus</taxon>
    </lineage>
</organism>
<evidence type="ECO:0000255" key="1">
    <source>
        <dbReference type="PROSITE-ProRule" id="PRU01182"/>
    </source>
</evidence>
<evidence type="ECO:0000305" key="2"/>
<proteinExistence type="inferred from homology"/>